<evidence type="ECO:0000255" key="1">
    <source>
        <dbReference type="HAMAP-Rule" id="MF_01010"/>
    </source>
</evidence>
<accession>Q2A275</accession>
<name>RLMD_FRATH</name>
<sequence>MGRSRYHNKLKEGIFEAEITALSHDGRGIAKVDGKTTFIPFTLPGEVVKFEYTFTKAKFDEAKVVEYVKKSLNRVNPPCDHFQICGGCSLQHMSTDAQIEHKQQTLINQLKYIGNGVEPENILPPLRTSNTEGYRNKARLGVRYVSKKGKILVGFRERNGRFLADIDKCIVLNPLVGDKITEISSFIETLSIYQHIAQLEIAIDDTRPAMIVRHLEPFTNEDLEKLRSFAQENNYWIYLQSKGPDTIFRLYPQGDVEPKKLSYQPAAGIDIGFEPNDFTQVNNDINKKMIKRAIELLDISENDSIIDLFCGLGNFTLPISQHAKTVIGVEGEPTMVKRAKETADNNNITNVNFYAANLFESFEDKEWFNNFEYNKMLLDPPRAGAQEVCNNIEKFNVKRIVYVSCDTAALARDAGILVNTKGYKLISAGVMDMFPHTMHVESIAVFEKI</sequence>
<comment type="function">
    <text evidence="1">Catalyzes the formation of 5-methyl-uridine at position 1939 (m5U1939) in 23S rRNA.</text>
</comment>
<comment type="catalytic activity">
    <reaction evidence="1">
        <text>uridine(1939) in 23S rRNA + S-adenosyl-L-methionine = 5-methyluridine(1939) in 23S rRNA + S-adenosyl-L-homocysteine + H(+)</text>
        <dbReference type="Rhea" id="RHEA:42908"/>
        <dbReference type="Rhea" id="RHEA-COMP:10278"/>
        <dbReference type="Rhea" id="RHEA-COMP:10279"/>
        <dbReference type="ChEBI" id="CHEBI:15378"/>
        <dbReference type="ChEBI" id="CHEBI:57856"/>
        <dbReference type="ChEBI" id="CHEBI:59789"/>
        <dbReference type="ChEBI" id="CHEBI:65315"/>
        <dbReference type="ChEBI" id="CHEBI:74447"/>
        <dbReference type="EC" id="2.1.1.190"/>
    </reaction>
</comment>
<comment type="similarity">
    <text evidence="1">Belongs to the class I-like SAM-binding methyltransferase superfamily. RNA M5U methyltransferase family. RlmD subfamily.</text>
</comment>
<feature type="chain" id="PRO_0000282041" description="23S rRNA (uracil(1939)-C(5))-methyltransferase RlmD">
    <location>
        <begin position="1"/>
        <end position="449"/>
    </location>
</feature>
<feature type="domain" description="TRAM" evidence="1">
    <location>
        <begin position="1"/>
        <end position="66"/>
    </location>
</feature>
<feature type="active site" description="Nucleophile" evidence="1">
    <location>
        <position position="405"/>
    </location>
</feature>
<feature type="binding site" evidence="1">
    <location>
        <position position="79"/>
    </location>
    <ligand>
        <name>[4Fe-4S] cluster</name>
        <dbReference type="ChEBI" id="CHEBI:49883"/>
    </ligand>
</feature>
<feature type="binding site" evidence="1">
    <location>
        <position position="85"/>
    </location>
    <ligand>
        <name>[4Fe-4S] cluster</name>
        <dbReference type="ChEBI" id="CHEBI:49883"/>
    </ligand>
</feature>
<feature type="binding site" evidence="1">
    <location>
        <position position="88"/>
    </location>
    <ligand>
        <name>[4Fe-4S] cluster</name>
        <dbReference type="ChEBI" id="CHEBI:49883"/>
    </ligand>
</feature>
<feature type="binding site" evidence="1">
    <location>
        <position position="169"/>
    </location>
    <ligand>
        <name>[4Fe-4S] cluster</name>
        <dbReference type="ChEBI" id="CHEBI:49883"/>
    </ligand>
</feature>
<feature type="binding site" evidence="1">
    <location>
        <position position="280"/>
    </location>
    <ligand>
        <name>S-adenosyl-L-methionine</name>
        <dbReference type="ChEBI" id="CHEBI:59789"/>
    </ligand>
</feature>
<feature type="binding site" evidence="1">
    <location>
        <position position="309"/>
    </location>
    <ligand>
        <name>S-adenosyl-L-methionine</name>
        <dbReference type="ChEBI" id="CHEBI:59789"/>
    </ligand>
</feature>
<feature type="binding site" evidence="1">
    <location>
        <position position="314"/>
    </location>
    <ligand>
        <name>S-adenosyl-L-methionine</name>
        <dbReference type="ChEBI" id="CHEBI:59789"/>
    </ligand>
</feature>
<feature type="binding site" evidence="1">
    <location>
        <position position="330"/>
    </location>
    <ligand>
        <name>S-adenosyl-L-methionine</name>
        <dbReference type="ChEBI" id="CHEBI:59789"/>
    </ligand>
</feature>
<feature type="binding site" evidence="1">
    <location>
        <position position="357"/>
    </location>
    <ligand>
        <name>S-adenosyl-L-methionine</name>
        <dbReference type="ChEBI" id="CHEBI:59789"/>
    </ligand>
</feature>
<feature type="binding site" evidence="1">
    <location>
        <position position="379"/>
    </location>
    <ligand>
        <name>S-adenosyl-L-methionine</name>
        <dbReference type="ChEBI" id="CHEBI:59789"/>
    </ligand>
</feature>
<gene>
    <name evidence="1" type="primary">rlmD</name>
    <name type="synonym">rumA</name>
    <name type="ordered locus">FTL_1531</name>
</gene>
<protein>
    <recommendedName>
        <fullName evidence="1">23S rRNA (uracil(1939)-C(5))-methyltransferase RlmD</fullName>
        <ecNumber evidence="1">2.1.1.190</ecNumber>
    </recommendedName>
    <alternativeName>
        <fullName evidence="1">23S rRNA(m5U1939)-methyltransferase</fullName>
    </alternativeName>
</protein>
<proteinExistence type="inferred from homology"/>
<keyword id="KW-0004">4Fe-4S</keyword>
<keyword id="KW-0408">Iron</keyword>
<keyword id="KW-0411">Iron-sulfur</keyword>
<keyword id="KW-0479">Metal-binding</keyword>
<keyword id="KW-0489">Methyltransferase</keyword>
<keyword id="KW-1185">Reference proteome</keyword>
<keyword id="KW-0698">rRNA processing</keyword>
<keyword id="KW-0949">S-adenosyl-L-methionine</keyword>
<keyword id="KW-0808">Transferase</keyword>
<dbReference type="EC" id="2.1.1.190" evidence="1"/>
<dbReference type="EMBL" id="AM233362">
    <property type="protein sequence ID" value="CAJ79970.1"/>
    <property type="molecule type" value="Genomic_DNA"/>
</dbReference>
<dbReference type="RefSeq" id="WP_003016867.1">
    <property type="nucleotide sequence ID" value="NZ_CP009694.1"/>
</dbReference>
<dbReference type="SMR" id="Q2A275"/>
<dbReference type="KEGG" id="ftl:FTL_1531"/>
<dbReference type="Proteomes" id="UP000001944">
    <property type="component" value="Chromosome"/>
</dbReference>
<dbReference type="GO" id="GO:0051539">
    <property type="term" value="F:4 iron, 4 sulfur cluster binding"/>
    <property type="evidence" value="ECO:0007669"/>
    <property type="project" value="UniProtKB-KW"/>
</dbReference>
<dbReference type="GO" id="GO:0005506">
    <property type="term" value="F:iron ion binding"/>
    <property type="evidence" value="ECO:0007669"/>
    <property type="project" value="UniProtKB-UniRule"/>
</dbReference>
<dbReference type="GO" id="GO:0003723">
    <property type="term" value="F:RNA binding"/>
    <property type="evidence" value="ECO:0007669"/>
    <property type="project" value="InterPro"/>
</dbReference>
<dbReference type="GO" id="GO:0070041">
    <property type="term" value="F:rRNA (uridine-C5-)-methyltransferase activity"/>
    <property type="evidence" value="ECO:0007669"/>
    <property type="project" value="UniProtKB-UniRule"/>
</dbReference>
<dbReference type="GO" id="GO:0070475">
    <property type="term" value="P:rRNA base methylation"/>
    <property type="evidence" value="ECO:0007669"/>
    <property type="project" value="TreeGrafter"/>
</dbReference>
<dbReference type="CDD" id="cd02440">
    <property type="entry name" value="AdoMet_MTases"/>
    <property type="match status" value="1"/>
</dbReference>
<dbReference type="FunFam" id="2.40.50.140:FF:000097">
    <property type="entry name" value="23S rRNA (uracil(1939)-C(5))-methyltransferase RlmD"/>
    <property type="match status" value="1"/>
</dbReference>
<dbReference type="Gene3D" id="2.40.50.1070">
    <property type="match status" value="1"/>
</dbReference>
<dbReference type="Gene3D" id="2.40.50.140">
    <property type="entry name" value="Nucleic acid-binding proteins"/>
    <property type="match status" value="1"/>
</dbReference>
<dbReference type="Gene3D" id="3.40.50.150">
    <property type="entry name" value="Vaccinia Virus protein VP39"/>
    <property type="match status" value="1"/>
</dbReference>
<dbReference type="HAMAP" id="MF_01010">
    <property type="entry name" value="23SrRNA_methyltr_RlmD"/>
    <property type="match status" value="1"/>
</dbReference>
<dbReference type="InterPro" id="IPR001566">
    <property type="entry name" value="23S_rRNA_MeTrfase_RlmD"/>
</dbReference>
<dbReference type="InterPro" id="IPR030391">
    <property type="entry name" value="MeTrfase_TrmA_CS"/>
</dbReference>
<dbReference type="InterPro" id="IPR012340">
    <property type="entry name" value="NA-bd_OB-fold"/>
</dbReference>
<dbReference type="InterPro" id="IPR029063">
    <property type="entry name" value="SAM-dependent_MTases_sf"/>
</dbReference>
<dbReference type="InterPro" id="IPR002792">
    <property type="entry name" value="TRAM_dom"/>
</dbReference>
<dbReference type="InterPro" id="IPR010280">
    <property type="entry name" value="U5_MeTrfase_fam"/>
</dbReference>
<dbReference type="NCBIfam" id="NF009639">
    <property type="entry name" value="PRK13168.1"/>
    <property type="match status" value="1"/>
</dbReference>
<dbReference type="NCBIfam" id="TIGR00479">
    <property type="entry name" value="rumA"/>
    <property type="match status" value="1"/>
</dbReference>
<dbReference type="PANTHER" id="PTHR11061:SF49">
    <property type="entry name" value="23S RRNA (URACIL(1939)-C(5))-METHYLTRANSFERASE RLMD"/>
    <property type="match status" value="1"/>
</dbReference>
<dbReference type="PANTHER" id="PTHR11061">
    <property type="entry name" value="RNA M5U METHYLTRANSFERASE"/>
    <property type="match status" value="1"/>
</dbReference>
<dbReference type="Pfam" id="PF01938">
    <property type="entry name" value="TRAM"/>
    <property type="match status" value="1"/>
</dbReference>
<dbReference type="Pfam" id="PF05958">
    <property type="entry name" value="tRNA_U5-meth_tr"/>
    <property type="match status" value="1"/>
</dbReference>
<dbReference type="SUPFAM" id="SSF50249">
    <property type="entry name" value="Nucleic acid-binding proteins"/>
    <property type="match status" value="1"/>
</dbReference>
<dbReference type="SUPFAM" id="SSF53335">
    <property type="entry name" value="S-adenosyl-L-methionine-dependent methyltransferases"/>
    <property type="match status" value="1"/>
</dbReference>
<dbReference type="PROSITE" id="PS51687">
    <property type="entry name" value="SAM_MT_RNA_M5U"/>
    <property type="match status" value="1"/>
</dbReference>
<dbReference type="PROSITE" id="PS50926">
    <property type="entry name" value="TRAM"/>
    <property type="match status" value="1"/>
</dbReference>
<dbReference type="PROSITE" id="PS01231">
    <property type="entry name" value="TRMA_2"/>
    <property type="match status" value="1"/>
</dbReference>
<organism>
    <name type="scientific">Francisella tularensis subsp. holarctica (strain LVS)</name>
    <dbReference type="NCBI Taxonomy" id="376619"/>
    <lineage>
        <taxon>Bacteria</taxon>
        <taxon>Pseudomonadati</taxon>
        <taxon>Pseudomonadota</taxon>
        <taxon>Gammaproteobacteria</taxon>
        <taxon>Thiotrichales</taxon>
        <taxon>Francisellaceae</taxon>
        <taxon>Francisella</taxon>
    </lineage>
</organism>
<reference key="1">
    <citation type="submission" date="2006-03" db="EMBL/GenBank/DDBJ databases">
        <title>Complete genome sequence of Francisella tularensis LVS (Live Vaccine Strain).</title>
        <authorList>
            <person name="Chain P."/>
            <person name="Larimer F."/>
            <person name="Land M."/>
            <person name="Stilwagen S."/>
            <person name="Larsson P."/>
            <person name="Bearden S."/>
            <person name="Chu M."/>
            <person name="Oyston P."/>
            <person name="Forsman M."/>
            <person name="Andersson S."/>
            <person name="Lindler L."/>
            <person name="Titball R."/>
            <person name="Garcia E."/>
        </authorList>
    </citation>
    <scope>NUCLEOTIDE SEQUENCE [LARGE SCALE GENOMIC DNA]</scope>
    <source>
        <strain>LVS</strain>
    </source>
</reference>